<comment type="function">
    <text evidence="1">Together with its co-chaperonin GroES, plays an essential role in assisting protein folding. The GroEL-GroES system forms a nano-cage that allows encapsulation of the non-native substrate proteins and provides a physical environment optimized to promote and accelerate protein folding.</text>
</comment>
<comment type="catalytic activity">
    <reaction evidence="1">
        <text>ATP + H2O + a folded polypeptide = ADP + phosphate + an unfolded polypeptide.</text>
        <dbReference type="EC" id="5.6.1.7"/>
    </reaction>
</comment>
<comment type="subunit">
    <text evidence="1">Forms a cylinder of 14 subunits composed of two heptameric rings stacked back-to-back. Interacts with the co-chaperonin GroES.</text>
</comment>
<comment type="subcellular location">
    <subcellularLocation>
        <location evidence="1">Cytoplasm</location>
    </subcellularLocation>
</comment>
<comment type="similarity">
    <text evidence="1">Belongs to the chaperonin (HSP60) family.</text>
</comment>
<name>CH602_ANADE</name>
<protein>
    <recommendedName>
        <fullName evidence="1">Chaperonin GroEL 2</fullName>
        <ecNumber evidence="1">5.6.1.7</ecNumber>
    </recommendedName>
    <alternativeName>
        <fullName evidence="1">60 kDa chaperonin 2</fullName>
    </alternativeName>
    <alternativeName>
        <fullName evidence="1">Chaperonin-60 2</fullName>
        <shortName evidence="1">Cpn60 2</shortName>
    </alternativeName>
</protein>
<keyword id="KW-0067">ATP-binding</keyword>
<keyword id="KW-0143">Chaperone</keyword>
<keyword id="KW-0963">Cytoplasm</keyword>
<keyword id="KW-0413">Isomerase</keyword>
<keyword id="KW-0547">Nucleotide-binding</keyword>
<keyword id="KW-1185">Reference proteome</keyword>
<organism>
    <name type="scientific">Anaeromyxobacter dehalogenans (strain 2CP-C)</name>
    <dbReference type="NCBI Taxonomy" id="290397"/>
    <lineage>
        <taxon>Bacteria</taxon>
        <taxon>Pseudomonadati</taxon>
        <taxon>Myxococcota</taxon>
        <taxon>Myxococcia</taxon>
        <taxon>Myxococcales</taxon>
        <taxon>Cystobacterineae</taxon>
        <taxon>Anaeromyxobacteraceae</taxon>
        <taxon>Anaeromyxobacter</taxon>
    </lineage>
</organism>
<accession>Q2IFK0</accession>
<reference key="1">
    <citation type="submission" date="2006-01" db="EMBL/GenBank/DDBJ databases">
        <title>Complete sequence of Anaeromyxobacter dehalogenans 2CP-C.</title>
        <authorList>
            <person name="Copeland A."/>
            <person name="Lucas S."/>
            <person name="Lapidus A."/>
            <person name="Barry K."/>
            <person name="Detter J.C."/>
            <person name="Glavina T."/>
            <person name="Hammon N."/>
            <person name="Israni S."/>
            <person name="Pitluck S."/>
            <person name="Brettin T."/>
            <person name="Bruce D."/>
            <person name="Han C."/>
            <person name="Tapia R."/>
            <person name="Gilna P."/>
            <person name="Kiss H."/>
            <person name="Schmutz J."/>
            <person name="Larimer F."/>
            <person name="Land M."/>
            <person name="Kyrpides N."/>
            <person name="Anderson I."/>
            <person name="Sanford R.A."/>
            <person name="Ritalahti K.M."/>
            <person name="Thomas H.S."/>
            <person name="Kirby J.R."/>
            <person name="Zhulin I.B."/>
            <person name="Loeffler F.E."/>
            <person name="Richardson P."/>
        </authorList>
    </citation>
    <scope>NUCLEOTIDE SEQUENCE [LARGE SCALE GENOMIC DNA]</scope>
    <source>
        <strain>2CP-C</strain>
    </source>
</reference>
<proteinExistence type="inferred from homology"/>
<gene>
    <name evidence="1" type="primary">groEL2</name>
    <name evidence="1" type="synonym">groL2</name>
    <name type="ordered locus">Adeh_3594</name>
</gene>
<feature type="chain" id="PRO_0000256871" description="Chaperonin GroEL 2">
    <location>
        <begin position="1"/>
        <end position="547"/>
    </location>
</feature>
<feature type="region of interest" description="Disordered" evidence="2">
    <location>
        <begin position="525"/>
        <end position="547"/>
    </location>
</feature>
<feature type="compositionally biased region" description="Gly residues" evidence="2">
    <location>
        <begin position="533"/>
        <end position="547"/>
    </location>
</feature>
<feature type="binding site" evidence="1">
    <location>
        <begin position="30"/>
        <end position="33"/>
    </location>
    <ligand>
        <name>ATP</name>
        <dbReference type="ChEBI" id="CHEBI:30616"/>
    </ligand>
</feature>
<feature type="binding site" evidence="1">
    <location>
        <position position="51"/>
    </location>
    <ligand>
        <name>ATP</name>
        <dbReference type="ChEBI" id="CHEBI:30616"/>
    </ligand>
</feature>
<feature type="binding site" evidence="1">
    <location>
        <begin position="87"/>
        <end position="91"/>
    </location>
    <ligand>
        <name>ATP</name>
        <dbReference type="ChEBI" id="CHEBI:30616"/>
    </ligand>
</feature>
<feature type="binding site" evidence="1">
    <location>
        <position position="415"/>
    </location>
    <ligand>
        <name>ATP</name>
        <dbReference type="ChEBI" id="CHEBI:30616"/>
    </ligand>
</feature>
<feature type="binding site" evidence="1">
    <location>
        <begin position="479"/>
        <end position="481"/>
    </location>
    <ligand>
        <name>ATP</name>
        <dbReference type="ChEBI" id="CHEBI:30616"/>
    </ligand>
</feature>
<feature type="binding site" evidence="1">
    <location>
        <position position="495"/>
    </location>
    <ligand>
        <name>ATP</name>
        <dbReference type="ChEBI" id="CHEBI:30616"/>
    </ligand>
</feature>
<evidence type="ECO:0000255" key="1">
    <source>
        <dbReference type="HAMAP-Rule" id="MF_00600"/>
    </source>
</evidence>
<evidence type="ECO:0000256" key="2">
    <source>
        <dbReference type="SAM" id="MobiDB-lite"/>
    </source>
</evidence>
<dbReference type="EC" id="5.6.1.7" evidence="1"/>
<dbReference type="EMBL" id="CP000251">
    <property type="protein sequence ID" value="ABC83360.1"/>
    <property type="molecule type" value="Genomic_DNA"/>
</dbReference>
<dbReference type="RefSeq" id="WP_011422642.1">
    <property type="nucleotide sequence ID" value="NC_007760.1"/>
</dbReference>
<dbReference type="SMR" id="Q2IFK0"/>
<dbReference type="STRING" id="290397.Adeh_3594"/>
<dbReference type="KEGG" id="ade:Adeh_3594"/>
<dbReference type="eggNOG" id="COG0459">
    <property type="taxonomic scope" value="Bacteria"/>
</dbReference>
<dbReference type="HOGENOM" id="CLU_016503_3_0_7"/>
<dbReference type="OrthoDB" id="9766614at2"/>
<dbReference type="Proteomes" id="UP000001935">
    <property type="component" value="Chromosome"/>
</dbReference>
<dbReference type="GO" id="GO:0005737">
    <property type="term" value="C:cytoplasm"/>
    <property type="evidence" value="ECO:0007669"/>
    <property type="project" value="UniProtKB-SubCell"/>
</dbReference>
<dbReference type="GO" id="GO:0005524">
    <property type="term" value="F:ATP binding"/>
    <property type="evidence" value="ECO:0007669"/>
    <property type="project" value="UniProtKB-UniRule"/>
</dbReference>
<dbReference type="GO" id="GO:0140662">
    <property type="term" value="F:ATP-dependent protein folding chaperone"/>
    <property type="evidence" value="ECO:0007669"/>
    <property type="project" value="InterPro"/>
</dbReference>
<dbReference type="GO" id="GO:0016853">
    <property type="term" value="F:isomerase activity"/>
    <property type="evidence" value="ECO:0007669"/>
    <property type="project" value="UniProtKB-KW"/>
</dbReference>
<dbReference type="GO" id="GO:0051082">
    <property type="term" value="F:unfolded protein binding"/>
    <property type="evidence" value="ECO:0007669"/>
    <property type="project" value="UniProtKB-UniRule"/>
</dbReference>
<dbReference type="GO" id="GO:0042026">
    <property type="term" value="P:protein refolding"/>
    <property type="evidence" value="ECO:0007669"/>
    <property type="project" value="UniProtKB-UniRule"/>
</dbReference>
<dbReference type="CDD" id="cd03344">
    <property type="entry name" value="GroEL"/>
    <property type="match status" value="1"/>
</dbReference>
<dbReference type="FunFam" id="1.10.560.10:FF:000001">
    <property type="entry name" value="60 kDa chaperonin"/>
    <property type="match status" value="1"/>
</dbReference>
<dbReference type="FunFam" id="3.50.7.10:FF:000001">
    <property type="entry name" value="60 kDa chaperonin"/>
    <property type="match status" value="1"/>
</dbReference>
<dbReference type="Gene3D" id="3.50.7.10">
    <property type="entry name" value="GroEL"/>
    <property type="match status" value="1"/>
</dbReference>
<dbReference type="Gene3D" id="1.10.560.10">
    <property type="entry name" value="GroEL-like equatorial domain"/>
    <property type="match status" value="1"/>
</dbReference>
<dbReference type="Gene3D" id="3.30.260.10">
    <property type="entry name" value="TCP-1-like chaperonin intermediate domain"/>
    <property type="match status" value="1"/>
</dbReference>
<dbReference type="HAMAP" id="MF_00600">
    <property type="entry name" value="CH60"/>
    <property type="match status" value="1"/>
</dbReference>
<dbReference type="InterPro" id="IPR018370">
    <property type="entry name" value="Chaperonin_Cpn60_CS"/>
</dbReference>
<dbReference type="InterPro" id="IPR001844">
    <property type="entry name" value="Cpn60/GroEL"/>
</dbReference>
<dbReference type="InterPro" id="IPR002423">
    <property type="entry name" value="Cpn60/GroEL/TCP-1"/>
</dbReference>
<dbReference type="InterPro" id="IPR027409">
    <property type="entry name" value="GroEL-like_apical_dom_sf"/>
</dbReference>
<dbReference type="InterPro" id="IPR027413">
    <property type="entry name" value="GROEL-like_equatorial_sf"/>
</dbReference>
<dbReference type="InterPro" id="IPR027410">
    <property type="entry name" value="TCP-1-like_intermed_sf"/>
</dbReference>
<dbReference type="NCBIfam" id="TIGR02348">
    <property type="entry name" value="GroEL"/>
    <property type="match status" value="1"/>
</dbReference>
<dbReference type="NCBIfam" id="NF000592">
    <property type="entry name" value="PRK00013.1"/>
    <property type="match status" value="1"/>
</dbReference>
<dbReference type="NCBIfam" id="NF009487">
    <property type="entry name" value="PRK12849.1"/>
    <property type="match status" value="1"/>
</dbReference>
<dbReference type="NCBIfam" id="NF009488">
    <property type="entry name" value="PRK12850.1"/>
    <property type="match status" value="1"/>
</dbReference>
<dbReference type="NCBIfam" id="NF009489">
    <property type="entry name" value="PRK12851.1"/>
    <property type="match status" value="1"/>
</dbReference>
<dbReference type="PANTHER" id="PTHR45633">
    <property type="entry name" value="60 KDA HEAT SHOCK PROTEIN, MITOCHONDRIAL"/>
    <property type="match status" value="1"/>
</dbReference>
<dbReference type="Pfam" id="PF00118">
    <property type="entry name" value="Cpn60_TCP1"/>
    <property type="match status" value="1"/>
</dbReference>
<dbReference type="PRINTS" id="PR00298">
    <property type="entry name" value="CHAPERONIN60"/>
</dbReference>
<dbReference type="SUPFAM" id="SSF52029">
    <property type="entry name" value="GroEL apical domain-like"/>
    <property type="match status" value="1"/>
</dbReference>
<dbReference type="SUPFAM" id="SSF48592">
    <property type="entry name" value="GroEL equatorial domain-like"/>
    <property type="match status" value="1"/>
</dbReference>
<dbReference type="SUPFAM" id="SSF54849">
    <property type="entry name" value="GroEL-intermediate domain like"/>
    <property type="match status" value="1"/>
</dbReference>
<dbReference type="PROSITE" id="PS00296">
    <property type="entry name" value="CHAPERONINS_CPN60"/>
    <property type="match status" value="1"/>
</dbReference>
<sequence>MAAKEIVFDQKARDAILKGVNTLADAVKVTLGPKGRNVVIEKSFGSPTITKDGVTVAKEIELENKFENMGAQMVKEVASKTSDVAGDGTTTATVLAQAIYREGSKLVAAGHNPMDVKRGIDKAVEAIVGELKKLSKPTKDHKEIAQVGIISANGDTTIGNIIAEAMEKVGKEGVITVEEAKGLETTLDVVEGMQFDRGYLSPYFVTDAERMEAVLEDAYILINEKKISNMKDLLPLLEQIARSGKPLIIVAEEVEGEALATLVVNKLRGTLHVCAVKAPGFGDRRKAMLEDIAILTGGRMIAEELGLKLEQVTLKDLGRAKRVTVDKDNTTIVDGAGKKEDIEARVKTIRAQIEETTSDYDREKLQERLAKLVGGVAVINVGAATETEMKEKKARVEDALHATRAAVEEGIVPGGGVAYLRCVKALEGVKVNEGEKVGLDIVRRAIEEPLRQISGNGGYEGSIVVNKVKEAKEAAFGFNAATGEYEDLVKAGVIDPTKVSRSALQNAASVASLMLTTMAMVAEKPKEESAAPAGGGMGGMGGMGGMM</sequence>